<feature type="chain" id="PRO_0000410996" description="NADH dehydrogenase [ubiquinone] 1 beta subcomplex subunit 3-B">
    <location>
        <begin position="1"/>
        <end position="73"/>
    </location>
</feature>
<feature type="transmembrane region" description="Helical" evidence="2">
    <location>
        <begin position="31"/>
        <end position="48"/>
    </location>
</feature>
<keyword id="KW-0002">3D-structure</keyword>
<keyword id="KW-0249">Electron transport</keyword>
<keyword id="KW-0472">Membrane</keyword>
<keyword id="KW-0496">Mitochondrion</keyword>
<keyword id="KW-0999">Mitochondrion inner membrane</keyword>
<keyword id="KW-1185">Reference proteome</keyword>
<keyword id="KW-0679">Respiratory chain</keyword>
<keyword id="KW-0812">Transmembrane</keyword>
<keyword id="KW-1133">Transmembrane helix</keyword>
<keyword id="KW-0813">Transport</keyword>
<comment type="function">
    <text evidence="1">Accessory subunit of the mitochondrial membrane respiratory chain NADH dehydrogenase (Complex I), that is believed not to be involved in catalysis. Complex I functions in the transfer of electrons from NADH to the respiratory chain. The immediate electron acceptor for the enzyme is believed to be ubiquinone (By similarity).</text>
</comment>
<comment type="subunit">
    <text>Complex I is composed of at least 49 different subunits.</text>
</comment>
<comment type="subcellular location">
    <subcellularLocation>
        <location evidence="1">Mitochondrion inner membrane</location>
        <topology evidence="1">Single-pass membrane protein</topology>
        <orientation evidence="1">Matrix side</orientation>
    </subcellularLocation>
</comment>
<comment type="similarity">
    <text evidence="3">Belongs to the complex I NDUFB3 subunit family.</text>
</comment>
<dbReference type="EMBL" id="AC012188">
    <property type="protein sequence ID" value="AAF43945.1"/>
    <property type="molecule type" value="Genomic_DNA"/>
</dbReference>
<dbReference type="EMBL" id="CP002684">
    <property type="protein sequence ID" value="AEE29165.1"/>
    <property type="molecule type" value="Genomic_DNA"/>
</dbReference>
<dbReference type="EMBL" id="AF332453">
    <property type="protein sequence ID" value="AAG48816.1"/>
    <property type="molecule type" value="mRNA"/>
</dbReference>
<dbReference type="EMBL" id="BT008330">
    <property type="protein sequence ID" value="AAP37689.1"/>
    <property type="molecule type" value="mRNA"/>
</dbReference>
<dbReference type="EMBL" id="AK228233">
    <property type="protein sequence ID" value="BAF00181.1"/>
    <property type="molecule type" value="mRNA"/>
</dbReference>
<dbReference type="EMBL" id="AY087079">
    <property type="protein sequence ID" value="AAM64640.1"/>
    <property type="molecule type" value="mRNA"/>
</dbReference>
<dbReference type="PIR" id="B86279">
    <property type="entry name" value="B86279"/>
</dbReference>
<dbReference type="RefSeq" id="NP_563952.1">
    <property type="nucleotide sequence ID" value="NM_101312.3"/>
</dbReference>
<dbReference type="PDB" id="7A23">
    <property type="method" value="EM"/>
    <property type="resolution" value="3.70 A"/>
    <property type="chains" value="t=1-73"/>
</dbReference>
<dbReference type="PDBsum" id="7A23"/>
<dbReference type="SMR" id="Q9M9R9"/>
<dbReference type="BioGRID" id="23247">
    <property type="interactions" value="1"/>
</dbReference>
<dbReference type="FunCoup" id="Q9M9R9">
    <property type="interactions" value="42"/>
</dbReference>
<dbReference type="STRING" id="3702.Q9M9R9"/>
<dbReference type="PaxDb" id="3702-AT1G14450.1"/>
<dbReference type="ProteomicsDB" id="251123"/>
<dbReference type="EnsemblPlants" id="AT1G14450.1">
    <property type="protein sequence ID" value="AT1G14450.1"/>
    <property type="gene ID" value="AT1G14450"/>
</dbReference>
<dbReference type="GeneID" id="838007"/>
<dbReference type="Gramene" id="AT1G14450.1">
    <property type="protein sequence ID" value="AT1G14450.1"/>
    <property type="gene ID" value="AT1G14450"/>
</dbReference>
<dbReference type="KEGG" id="ath:AT1G14450"/>
<dbReference type="Araport" id="AT1G14450"/>
<dbReference type="TAIR" id="AT1G14450"/>
<dbReference type="eggNOG" id="ENOG502S7DZ">
    <property type="taxonomic scope" value="Eukaryota"/>
</dbReference>
<dbReference type="HOGENOM" id="CLU_145518_3_0_1"/>
<dbReference type="InParanoid" id="Q9M9R9"/>
<dbReference type="OMA" id="SNQFRHA"/>
<dbReference type="OrthoDB" id="521512at2759"/>
<dbReference type="PhylomeDB" id="Q9M9R9"/>
<dbReference type="PRO" id="PR:Q9M9R9"/>
<dbReference type="Proteomes" id="UP000006548">
    <property type="component" value="Chromosome 1"/>
</dbReference>
<dbReference type="ExpressionAtlas" id="Q9M9R9">
    <property type="expression patterns" value="baseline and differential"/>
</dbReference>
<dbReference type="GO" id="GO:0005576">
    <property type="term" value="C:extracellular region"/>
    <property type="evidence" value="ECO:0007005"/>
    <property type="project" value="TAIR"/>
</dbReference>
<dbReference type="GO" id="GO:0005743">
    <property type="term" value="C:mitochondrial inner membrane"/>
    <property type="evidence" value="ECO:0007669"/>
    <property type="project" value="UniProtKB-SubCell"/>
</dbReference>
<dbReference type="GO" id="GO:0031966">
    <property type="term" value="C:mitochondrial membrane"/>
    <property type="evidence" value="ECO:0000314"/>
    <property type="project" value="TAIR"/>
</dbReference>
<dbReference type="GO" id="GO:0045271">
    <property type="term" value="C:respiratory chain complex I"/>
    <property type="evidence" value="ECO:0000314"/>
    <property type="project" value="TAIR"/>
</dbReference>
<dbReference type="GO" id="GO:0022900">
    <property type="term" value="P:electron transport chain"/>
    <property type="evidence" value="ECO:0007669"/>
    <property type="project" value="InterPro"/>
</dbReference>
<dbReference type="GO" id="GO:0009853">
    <property type="term" value="P:photorespiration"/>
    <property type="evidence" value="ECO:0000304"/>
    <property type="project" value="TAIR"/>
</dbReference>
<dbReference type="InterPro" id="IPR012576">
    <property type="entry name" value="NDUFB3"/>
</dbReference>
<dbReference type="PANTHER" id="PTHR15082:SF4">
    <property type="entry name" value="NADH DEHYDROGENASE [UBIQUINONE] 1 BETA SUBCOMPLEX SUBUNIT 3-B"/>
    <property type="match status" value="1"/>
</dbReference>
<dbReference type="PANTHER" id="PTHR15082">
    <property type="entry name" value="NADH-UBIQUINONE OXIDOREDUCTASE B12 SUBUNIT"/>
    <property type="match status" value="1"/>
</dbReference>
<dbReference type="Pfam" id="PF08122">
    <property type="entry name" value="NDUF_B12"/>
    <property type="match status" value="1"/>
</dbReference>
<sequence>MAKPLGTTGEFFRRRDEWRKHPMLSNQMRHALPGLGIGVAAFCVYLVGEQIYNKALAPSKSSHHHQEQTAPSH</sequence>
<name>NDB3B_ARATH</name>
<evidence type="ECO:0000250" key="1"/>
<evidence type="ECO:0000255" key="2"/>
<evidence type="ECO:0000305" key="3"/>
<gene>
    <name type="ordered locus">At1g14450</name>
    <name type="ORF">F14L17.22</name>
</gene>
<organism>
    <name type="scientific">Arabidopsis thaliana</name>
    <name type="common">Mouse-ear cress</name>
    <dbReference type="NCBI Taxonomy" id="3702"/>
    <lineage>
        <taxon>Eukaryota</taxon>
        <taxon>Viridiplantae</taxon>
        <taxon>Streptophyta</taxon>
        <taxon>Embryophyta</taxon>
        <taxon>Tracheophyta</taxon>
        <taxon>Spermatophyta</taxon>
        <taxon>Magnoliopsida</taxon>
        <taxon>eudicotyledons</taxon>
        <taxon>Gunneridae</taxon>
        <taxon>Pentapetalae</taxon>
        <taxon>rosids</taxon>
        <taxon>malvids</taxon>
        <taxon>Brassicales</taxon>
        <taxon>Brassicaceae</taxon>
        <taxon>Camelineae</taxon>
        <taxon>Arabidopsis</taxon>
    </lineage>
</organism>
<accession>Q9M9R9</accession>
<reference key="1">
    <citation type="journal article" date="2000" name="Nature">
        <title>Sequence and analysis of chromosome 1 of the plant Arabidopsis thaliana.</title>
        <authorList>
            <person name="Theologis A."/>
            <person name="Ecker J.R."/>
            <person name="Palm C.J."/>
            <person name="Federspiel N.A."/>
            <person name="Kaul S."/>
            <person name="White O."/>
            <person name="Alonso J."/>
            <person name="Altafi H."/>
            <person name="Araujo R."/>
            <person name="Bowman C.L."/>
            <person name="Brooks S.Y."/>
            <person name="Buehler E."/>
            <person name="Chan A."/>
            <person name="Chao Q."/>
            <person name="Chen H."/>
            <person name="Cheuk R.F."/>
            <person name="Chin C.W."/>
            <person name="Chung M.K."/>
            <person name="Conn L."/>
            <person name="Conway A.B."/>
            <person name="Conway A.R."/>
            <person name="Creasy T.H."/>
            <person name="Dewar K."/>
            <person name="Dunn P."/>
            <person name="Etgu P."/>
            <person name="Feldblyum T.V."/>
            <person name="Feng J.-D."/>
            <person name="Fong B."/>
            <person name="Fujii C.Y."/>
            <person name="Gill J.E."/>
            <person name="Goldsmith A.D."/>
            <person name="Haas B."/>
            <person name="Hansen N.F."/>
            <person name="Hughes B."/>
            <person name="Huizar L."/>
            <person name="Hunter J.L."/>
            <person name="Jenkins J."/>
            <person name="Johnson-Hopson C."/>
            <person name="Khan S."/>
            <person name="Khaykin E."/>
            <person name="Kim C.J."/>
            <person name="Koo H.L."/>
            <person name="Kremenetskaia I."/>
            <person name="Kurtz D.B."/>
            <person name="Kwan A."/>
            <person name="Lam B."/>
            <person name="Langin-Hooper S."/>
            <person name="Lee A."/>
            <person name="Lee J.M."/>
            <person name="Lenz C.A."/>
            <person name="Li J.H."/>
            <person name="Li Y.-P."/>
            <person name="Lin X."/>
            <person name="Liu S.X."/>
            <person name="Liu Z.A."/>
            <person name="Luros J.S."/>
            <person name="Maiti R."/>
            <person name="Marziali A."/>
            <person name="Militscher J."/>
            <person name="Miranda M."/>
            <person name="Nguyen M."/>
            <person name="Nierman W.C."/>
            <person name="Osborne B.I."/>
            <person name="Pai G."/>
            <person name="Peterson J."/>
            <person name="Pham P.K."/>
            <person name="Rizzo M."/>
            <person name="Rooney T."/>
            <person name="Rowley D."/>
            <person name="Sakano H."/>
            <person name="Salzberg S.L."/>
            <person name="Schwartz J.R."/>
            <person name="Shinn P."/>
            <person name="Southwick A.M."/>
            <person name="Sun H."/>
            <person name="Tallon L.J."/>
            <person name="Tambunga G."/>
            <person name="Toriumi M.J."/>
            <person name="Town C.D."/>
            <person name="Utterback T."/>
            <person name="Van Aken S."/>
            <person name="Vaysberg M."/>
            <person name="Vysotskaia V.S."/>
            <person name="Walker M."/>
            <person name="Wu D."/>
            <person name="Yu G."/>
            <person name="Fraser C.M."/>
            <person name="Venter J.C."/>
            <person name="Davis R.W."/>
        </authorList>
    </citation>
    <scope>NUCLEOTIDE SEQUENCE [LARGE SCALE GENOMIC DNA]</scope>
    <source>
        <strain>cv. Columbia</strain>
    </source>
</reference>
<reference key="2">
    <citation type="journal article" date="2017" name="Plant J.">
        <title>Araport11: a complete reannotation of the Arabidopsis thaliana reference genome.</title>
        <authorList>
            <person name="Cheng C.Y."/>
            <person name="Krishnakumar V."/>
            <person name="Chan A.P."/>
            <person name="Thibaud-Nissen F."/>
            <person name="Schobel S."/>
            <person name="Town C.D."/>
        </authorList>
    </citation>
    <scope>GENOME REANNOTATION</scope>
    <source>
        <strain>cv. Columbia</strain>
    </source>
</reference>
<reference key="3">
    <citation type="journal article" date="2003" name="Science">
        <title>Empirical analysis of transcriptional activity in the Arabidopsis genome.</title>
        <authorList>
            <person name="Yamada K."/>
            <person name="Lim J."/>
            <person name="Dale J.M."/>
            <person name="Chen H."/>
            <person name="Shinn P."/>
            <person name="Palm C.J."/>
            <person name="Southwick A.M."/>
            <person name="Wu H.C."/>
            <person name="Kim C.J."/>
            <person name="Nguyen M."/>
            <person name="Pham P.K."/>
            <person name="Cheuk R.F."/>
            <person name="Karlin-Newmann G."/>
            <person name="Liu S.X."/>
            <person name="Lam B."/>
            <person name="Sakano H."/>
            <person name="Wu T."/>
            <person name="Yu G."/>
            <person name="Miranda M."/>
            <person name="Quach H.L."/>
            <person name="Tripp M."/>
            <person name="Chang C.H."/>
            <person name="Lee J.M."/>
            <person name="Toriumi M.J."/>
            <person name="Chan M.M."/>
            <person name="Tang C.C."/>
            <person name="Onodera C.S."/>
            <person name="Deng J.M."/>
            <person name="Akiyama K."/>
            <person name="Ansari Y."/>
            <person name="Arakawa T."/>
            <person name="Banh J."/>
            <person name="Banno F."/>
            <person name="Bowser L."/>
            <person name="Brooks S.Y."/>
            <person name="Carninci P."/>
            <person name="Chao Q."/>
            <person name="Choy N."/>
            <person name="Enju A."/>
            <person name="Goldsmith A.D."/>
            <person name="Gurjal M."/>
            <person name="Hansen N.F."/>
            <person name="Hayashizaki Y."/>
            <person name="Johnson-Hopson C."/>
            <person name="Hsuan V.W."/>
            <person name="Iida K."/>
            <person name="Karnes M."/>
            <person name="Khan S."/>
            <person name="Koesema E."/>
            <person name="Ishida J."/>
            <person name="Jiang P.X."/>
            <person name="Jones T."/>
            <person name="Kawai J."/>
            <person name="Kamiya A."/>
            <person name="Meyers C."/>
            <person name="Nakajima M."/>
            <person name="Narusaka M."/>
            <person name="Seki M."/>
            <person name="Sakurai T."/>
            <person name="Satou M."/>
            <person name="Tamse R."/>
            <person name="Vaysberg M."/>
            <person name="Wallender E.K."/>
            <person name="Wong C."/>
            <person name="Yamamura Y."/>
            <person name="Yuan S."/>
            <person name="Shinozaki K."/>
            <person name="Davis R.W."/>
            <person name="Theologis A."/>
            <person name="Ecker J.R."/>
        </authorList>
    </citation>
    <scope>NUCLEOTIDE SEQUENCE [LARGE SCALE MRNA]</scope>
    <source>
        <strain>cv. Columbia</strain>
    </source>
</reference>
<reference key="4">
    <citation type="submission" date="2006-07" db="EMBL/GenBank/DDBJ databases">
        <title>Large-scale analysis of RIKEN Arabidopsis full-length (RAFL) cDNAs.</title>
        <authorList>
            <person name="Totoki Y."/>
            <person name="Seki M."/>
            <person name="Ishida J."/>
            <person name="Nakajima M."/>
            <person name="Enju A."/>
            <person name="Kamiya A."/>
            <person name="Narusaka M."/>
            <person name="Shin-i T."/>
            <person name="Nakagawa M."/>
            <person name="Sakamoto N."/>
            <person name="Oishi K."/>
            <person name="Kohara Y."/>
            <person name="Kobayashi M."/>
            <person name="Toyoda A."/>
            <person name="Sakaki Y."/>
            <person name="Sakurai T."/>
            <person name="Iida K."/>
            <person name="Akiyama K."/>
            <person name="Satou M."/>
            <person name="Toyoda T."/>
            <person name="Konagaya A."/>
            <person name="Carninci P."/>
            <person name="Kawai J."/>
            <person name="Hayashizaki Y."/>
            <person name="Shinozaki K."/>
        </authorList>
    </citation>
    <scope>NUCLEOTIDE SEQUENCE [LARGE SCALE MRNA]</scope>
    <source>
        <strain>cv. Columbia</strain>
    </source>
</reference>
<reference key="5">
    <citation type="submission" date="2002-03" db="EMBL/GenBank/DDBJ databases">
        <title>Full-length cDNA from Arabidopsis thaliana.</title>
        <authorList>
            <person name="Brover V.V."/>
            <person name="Troukhan M.E."/>
            <person name="Alexandrov N.A."/>
            <person name="Lu Y.-P."/>
            <person name="Flavell R.B."/>
            <person name="Feldmann K.A."/>
        </authorList>
    </citation>
    <scope>NUCLEOTIDE SEQUENCE [LARGE SCALE MRNA]</scope>
</reference>
<proteinExistence type="evidence at protein level"/>
<protein>
    <recommendedName>
        <fullName>NADH dehydrogenase [ubiquinone] 1 beta subcomplex subunit 3-B</fullName>
    </recommendedName>
</protein>